<proteinExistence type="evidence at transcript level"/>
<name>OSCP1_RAT</name>
<evidence type="ECO:0000250" key="1"/>
<evidence type="ECO:0000269" key="2">
    <source>
    </source>
</evidence>
<sequence>MSVRTLPLLFLNLGGEMLYVLDQRLRAQNIPGDKARKVLNDIISTMFNRKFTEELFKPQELYSKKALRTVYDRLAHASIMRLNQASMDKLYDLMTMAFKYQVLLCPRPKDVLLVTFNHLDSIKGFIQDSPTIIHQVDETFRQLTEIYGSLSAGEFQLIRQTLLIFFQDLHIRVSTFLKDKVQNSNGRFVLPVSGPVPWGIEVPGVIRVFNDKGDEVKRMEFRHGGDYVAAHKEGSFELYGDRVLKLGTNMYSASRPVETHMSATSKNSASRAQENIAPNPLAKEELNFLARLIGGMEIKKPSGPEPGFRLNLFTTDEEEEHAALSRPEELSYEVISIQATQDQQRSEELARIMEEFEMTEQPERNTSKGDDLLAMMDRL</sequence>
<feature type="chain" id="PRO_0000251967" description="Protein OSCP1">
    <location>
        <begin position="1"/>
        <end position="379"/>
    </location>
</feature>
<reference key="1">
    <citation type="journal article" date="2004" name="Genome Res.">
        <title>The status, quality, and expansion of the NIH full-length cDNA project: the Mammalian Gene Collection (MGC).</title>
        <authorList>
            <consortium name="The MGC Project Team"/>
        </authorList>
    </citation>
    <scope>NUCLEOTIDE SEQUENCE [LARGE SCALE MRNA]</scope>
    <source>
        <tissue>Testis</tissue>
    </source>
</reference>
<reference key="2">
    <citation type="journal article" date="2005" name="J. Biol. Chem.">
        <title>Isolation and functional characterization of a novel organic solute carrier protein, hOSCP1.</title>
        <authorList>
            <person name="Kobayashi Y."/>
            <person name="Shibusawa A."/>
            <person name="Saito H."/>
            <person name="Ohshiro N."/>
            <person name="Ohbayashi M."/>
            <person name="Kohyama N."/>
            <person name="Yamamoto T."/>
        </authorList>
    </citation>
    <scope>TISSUE SPECIFICITY</scope>
</reference>
<organism>
    <name type="scientific">Rattus norvegicus</name>
    <name type="common">Rat</name>
    <dbReference type="NCBI Taxonomy" id="10116"/>
    <lineage>
        <taxon>Eukaryota</taxon>
        <taxon>Metazoa</taxon>
        <taxon>Chordata</taxon>
        <taxon>Craniata</taxon>
        <taxon>Vertebrata</taxon>
        <taxon>Euteleostomi</taxon>
        <taxon>Mammalia</taxon>
        <taxon>Eutheria</taxon>
        <taxon>Euarchontoglires</taxon>
        <taxon>Glires</taxon>
        <taxon>Rodentia</taxon>
        <taxon>Myomorpha</taxon>
        <taxon>Muroidea</taxon>
        <taxon>Muridae</taxon>
        <taxon>Murinae</taxon>
        <taxon>Rattus</taxon>
    </lineage>
</organism>
<protein>
    <recommendedName>
        <fullName>Protein OSCP1</fullName>
    </recommendedName>
</protein>
<comment type="function">
    <text evidence="1">May be involved in drug clearance in the placenta.</text>
</comment>
<comment type="subcellular location">
    <subcellularLocation>
        <location evidence="1">Basal cell membrane</location>
    </subcellularLocation>
</comment>
<comment type="tissue specificity">
    <text evidence="2">Predominantly expressed in testis.</text>
</comment>
<accession>Q4QQS3</accession>
<gene>
    <name type="primary">Oscp1</name>
</gene>
<keyword id="KW-1003">Cell membrane</keyword>
<keyword id="KW-0472">Membrane</keyword>
<keyword id="KW-1185">Reference proteome</keyword>
<keyword id="KW-0813">Transport</keyword>
<dbReference type="EMBL" id="BC098048">
    <property type="protein sequence ID" value="AAH98048.1"/>
    <property type="molecule type" value="mRNA"/>
</dbReference>
<dbReference type="RefSeq" id="NP_001025094.1">
    <property type="nucleotide sequence ID" value="NM_001029923.1"/>
</dbReference>
<dbReference type="BioGRID" id="263565">
    <property type="interactions" value="2"/>
</dbReference>
<dbReference type="FunCoup" id="Q4QQS3">
    <property type="interactions" value="1404"/>
</dbReference>
<dbReference type="STRING" id="10116.ENSRNOP00000034112"/>
<dbReference type="PhosphoSitePlus" id="Q4QQS3"/>
<dbReference type="PaxDb" id="10116-ENSRNOP00000034112"/>
<dbReference type="Ensembl" id="ENSRNOT00000037246.6">
    <property type="protein sequence ID" value="ENSRNOP00000034112.4"/>
    <property type="gene ID" value="ENSRNOG00000026978.7"/>
</dbReference>
<dbReference type="GeneID" id="362595"/>
<dbReference type="KEGG" id="rno:362595"/>
<dbReference type="UCSC" id="RGD:1306596">
    <property type="organism name" value="rat"/>
</dbReference>
<dbReference type="AGR" id="RGD:1306596"/>
<dbReference type="CTD" id="127700"/>
<dbReference type="RGD" id="1306596">
    <property type="gene designation" value="Oscp1"/>
</dbReference>
<dbReference type="eggNOG" id="KOG4033">
    <property type="taxonomic scope" value="Eukaryota"/>
</dbReference>
<dbReference type="GeneTree" id="ENSGT00390000004808"/>
<dbReference type="HOGENOM" id="CLU_039360_1_0_1"/>
<dbReference type="InParanoid" id="Q4QQS3"/>
<dbReference type="OrthoDB" id="2157380at2759"/>
<dbReference type="PRO" id="PR:Q4QQS3"/>
<dbReference type="Proteomes" id="UP000002494">
    <property type="component" value="Chromosome 5"/>
</dbReference>
<dbReference type="Bgee" id="ENSRNOG00000026978">
    <property type="expression patterns" value="Expressed in testis and 19 other cell types or tissues"/>
</dbReference>
<dbReference type="GO" id="GO:0009925">
    <property type="term" value="C:basal plasma membrane"/>
    <property type="evidence" value="ECO:0000266"/>
    <property type="project" value="RGD"/>
</dbReference>
<dbReference type="GO" id="GO:0005737">
    <property type="term" value="C:cytoplasm"/>
    <property type="evidence" value="ECO:0000266"/>
    <property type="project" value="RGD"/>
</dbReference>
<dbReference type="GO" id="GO:0005886">
    <property type="term" value="C:plasma membrane"/>
    <property type="evidence" value="ECO:0000318"/>
    <property type="project" value="GO_Central"/>
</dbReference>
<dbReference type="GO" id="GO:0022857">
    <property type="term" value="F:transmembrane transporter activity"/>
    <property type="evidence" value="ECO:0000266"/>
    <property type="project" value="RGD"/>
</dbReference>
<dbReference type="GO" id="GO:1990961">
    <property type="term" value="P:xenobiotic detoxification by transmembrane export across the plasma membrane"/>
    <property type="evidence" value="ECO:0000266"/>
    <property type="project" value="RGD"/>
</dbReference>
<dbReference type="InterPro" id="IPR019332">
    <property type="entry name" value="OSCP1"/>
</dbReference>
<dbReference type="PANTHER" id="PTHR21439">
    <property type="entry name" value="OXIDORED-NITRO DOMAIN-CONTAINING PROTEIN"/>
    <property type="match status" value="1"/>
</dbReference>
<dbReference type="PANTHER" id="PTHR21439:SF0">
    <property type="entry name" value="PROTEIN OSCP1"/>
    <property type="match status" value="1"/>
</dbReference>
<dbReference type="Pfam" id="PF10188">
    <property type="entry name" value="Oscp1"/>
    <property type="match status" value="1"/>
</dbReference>